<name>PPS_THEON</name>
<comment type="function">
    <text evidence="1">Catalyzes the condensation of (R)-4-phosphopantoate and beta-alanine to 4'-phosphopantothenate in the CoA biosynthesis pathway.</text>
</comment>
<comment type="catalytic activity">
    <reaction evidence="1">
        <text>(R)-4-phosphopantoate + beta-alanine + ATP = (R)-4'-phosphopantothenate + AMP + diphosphate + H(+)</text>
        <dbReference type="Rhea" id="RHEA:27930"/>
        <dbReference type="ChEBI" id="CHEBI:10986"/>
        <dbReference type="ChEBI" id="CHEBI:15378"/>
        <dbReference type="ChEBI" id="CHEBI:30616"/>
        <dbReference type="ChEBI" id="CHEBI:33019"/>
        <dbReference type="ChEBI" id="CHEBI:57966"/>
        <dbReference type="ChEBI" id="CHEBI:61294"/>
        <dbReference type="ChEBI" id="CHEBI:456215"/>
        <dbReference type="EC" id="6.3.2.36"/>
    </reaction>
</comment>
<comment type="pathway">
    <text evidence="1">Cofactor biosynthesis; coenzyme A biosynthesis.</text>
</comment>
<comment type="subunit">
    <text evidence="1 2">Homodimer.</text>
</comment>
<comment type="similarity">
    <text evidence="1 4">Belongs to the archaeal phosphopantothenate synthetase family.</text>
</comment>
<protein>
    <recommendedName>
        <fullName evidence="1 4">4-phosphopantoate--beta-alanine ligase</fullName>
        <ecNumber evidence="1">6.3.2.36</ecNumber>
    </recommendedName>
    <alternativeName>
        <fullName evidence="1 3">Phosphopantothenate synthetase</fullName>
        <shortName evidence="1 3">PPS</shortName>
    </alternativeName>
</protein>
<keyword id="KW-0002">3D-structure</keyword>
<keyword id="KW-0067">ATP-binding</keyword>
<keyword id="KW-0173">Coenzyme A biosynthesis</keyword>
<keyword id="KW-0436">Ligase</keyword>
<keyword id="KW-0547">Nucleotide-binding</keyword>
<gene>
    <name evidence="5" type="ordered locus">TON_1374</name>
</gene>
<sequence length="261" mass="29685">MVKIPKSHPRYWSLYYREKIIEGMEKGMTAKAGLIAHGRGEAFDYLIGERTIEPAERAMRAAVAKLLLAENPVVSVNGNVAALVPKETIELARALNAKLEINLFYRTEDRVKAIAEELRKYDPEIELLGINPTKRIPGLEHERGKVDENGIWKADVVVVPLEDGDRTEALVRMGKFVITIDLNPLSRSARMADITIVDNIVRAYPRMTELAREMKDYSRGELIRIIEEYDNGKTLNDVLLHIRDRLTKLAEGGIWRKKQLD</sequence>
<organism>
    <name type="scientific">Thermococcus onnurineus (strain NA1)</name>
    <dbReference type="NCBI Taxonomy" id="523850"/>
    <lineage>
        <taxon>Archaea</taxon>
        <taxon>Methanobacteriati</taxon>
        <taxon>Methanobacteriota</taxon>
        <taxon>Thermococci</taxon>
        <taxon>Thermococcales</taxon>
        <taxon>Thermococcaceae</taxon>
        <taxon>Thermococcus</taxon>
    </lineage>
</organism>
<accession>B6YXQ1</accession>
<reference key="1">
    <citation type="journal article" date="2008" name="J. Bacteriol.">
        <title>The complete genome sequence of Thermococcus onnurineus NA1 reveals a mixed heterotrophic and carboxydotrophic metabolism.</title>
        <authorList>
            <person name="Lee H.S."/>
            <person name="Kang S.G."/>
            <person name="Bae S.S."/>
            <person name="Lim J.K."/>
            <person name="Cho Y."/>
            <person name="Kim Y.J."/>
            <person name="Jeon J.H."/>
            <person name="Cha S.-S."/>
            <person name="Kwon K.K."/>
            <person name="Kim H.-T."/>
            <person name="Park C.-J."/>
            <person name="Lee H.-W."/>
            <person name="Kim S.I."/>
            <person name="Chun J."/>
            <person name="Colwell R.R."/>
            <person name="Kim S.-J."/>
            <person name="Lee J.-H."/>
        </authorList>
    </citation>
    <scope>NUCLEOTIDE SEQUENCE [LARGE SCALE GENOMIC DNA]</scope>
    <source>
        <strain>NA1</strain>
    </source>
</reference>
<reference evidence="6 7" key="2">
    <citation type="journal article" date="2013" name="Biochem. Biophys. Res. Commun.">
        <title>The crystal structure of a novel phosphopantothenate synthetase from the hyperthermophilic archaea, Thermococcus onnurineus NA1.</title>
        <authorList>
            <person name="Kim M.K."/>
            <person name="An Y.J."/>
            <person name="Cha S.S."/>
        </authorList>
    </citation>
    <scope>X-RAY CRYSTALLOGRAPHY (1.96 ANGSTROMS) OF APOENZYME AND IN COMPLEX WITH ATP</scope>
    <scope>SUBUNIT</scope>
    <source>
        <strain>NA1</strain>
    </source>
</reference>
<dbReference type="EC" id="6.3.2.36" evidence="1"/>
<dbReference type="EMBL" id="CP000855">
    <property type="protein sequence ID" value="ACJ16864.1"/>
    <property type="molecule type" value="Genomic_DNA"/>
</dbReference>
<dbReference type="RefSeq" id="WP_012572336.1">
    <property type="nucleotide sequence ID" value="NC_011529.1"/>
</dbReference>
<dbReference type="PDB" id="4MB0">
    <property type="method" value="X-ray"/>
    <property type="resolution" value="1.96 A"/>
    <property type="chains" value="A/B/C/D=1-261"/>
</dbReference>
<dbReference type="PDB" id="4MB2">
    <property type="method" value="X-ray"/>
    <property type="resolution" value="2.19 A"/>
    <property type="chains" value="A/B/C/D=1-261"/>
</dbReference>
<dbReference type="PDBsum" id="4MB0"/>
<dbReference type="PDBsum" id="4MB2"/>
<dbReference type="SMR" id="B6YXQ1"/>
<dbReference type="STRING" id="523850.TON_1374"/>
<dbReference type="GeneID" id="7018405"/>
<dbReference type="KEGG" id="ton:TON_1374"/>
<dbReference type="PATRIC" id="fig|523850.10.peg.1382"/>
<dbReference type="eggNOG" id="arCOG04262">
    <property type="taxonomic scope" value="Archaea"/>
</dbReference>
<dbReference type="HOGENOM" id="CLU_078701_0_0_2"/>
<dbReference type="OrthoDB" id="10078at2157"/>
<dbReference type="UniPathway" id="UPA00241"/>
<dbReference type="EvolutionaryTrace" id="B6YXQ1"/>
<dbReference type="Proteomes" id="UP000002727">
    <property type="component" value="Chromosome"/>
</dbReference>
<dbReference type="GO" id="GO:0016881">
    <property type="term" value="F:acid-amino acid ligase activity"/>
    <property type="evidence" value="ECO:0007669"/>
    <property type="project" value="UniProtKB-UniRule"/>
</dbReference>
<dbReference type="GO" id="GO:0005524">
    <property type="term" value="F:ATP binding"/>
    <property type="evidence" value="ECO:0007669"/>
    <property type="project" value="UniProtKB-KW"/>
</dbReference>
<dbReference type="GO" id="GO:0015937">
    <property type="term" value="P:coenzyme A biosynthetic process"/>
    <property type="evidence" value="ECO:0007669"/>
    <property type="project" value="UniProtKB-UniRule"/>
</dbReference>
<dbReference type="Gene3D" id="3.40.50.12640">
    <property type="entry name" value="Phosphopantoate/pantothenate synthetase"/>
    <property type="match status" value="1"/>
</dbReference>
<dbReference type="HAMAP" id="MF_02224">
    <property type="entry name" value="PPS"/>
    <property type="match status" value="1"/>
</dbReference>
<dbReference type="InterPro" id="IPR002855">
    <property type="entry name" value="PPS/PS"/>
</dbReference>
<dbReference type="InterPro" id="IPR038138">
    <property type="entry name" value="PPS/PS_sf"/>
</dbReference>
<dbReference type="NCBIfam" id="NF041123">
    <property type="entry name" value="phpantohe_syn_Arch"/>
    <property type="match status" value="1"/>
</dbReference>
<dbReference type="NCBIfam" id="NF010324">
    <property type="entry name" value="PRK13761.1"/>
    <property type="match status" value="1"/>
</dbReference>
<dbReference type="PANTHER" id="PTHR40695">
    <property type="entry name" value="4-PHOSPHOPANTOATE--BETA-ALANINE LIGASE"/>
    <property type="match status" value="1"/>
</dbReference>
<dbReference type="PANTHER" id="PTHR40695:SF1">
    <property type="entry name" value="4-PHOSPHOPANTOATE--BETA-ALANINE LIGASE"/>
    <property type="match status" value="1"/>
</dbReference>
<dbReference type="Pfam" id="PF02006">
    <property type="entry name" value="PPS_PS"/>
    <property type="match status" value="1"/>
</dbReference>
<dbReference type="PIRSF" id="PIRSF004853">
    <property type="entry name" value="UCP004853"/>
    <property type="match status" value="1"/>
</dbReference>
<evidence type="ECO:0000255" key="1">
    <source>
        <dbReference type="HAMAP-Rule" id="MF_02224"/>
    </source>
</evidence>
<evidence type="ECO:0000269" key="2">
    <source>
    </source>
</evidence>
<evidence type="ECO:0000303" key="3">
    <source>
    </source>
</evidence>
<evidence type="ECO:0000305" key="4"/>
<evidence type="ECO:0000312" key="5">
    <source>
        <dbReference type="EMBL" id="ACJ16864.1"/>
    </source>
</evidence>
<evidence type="ECO:0007744" key="6">
    <source>
        <dbReference type="PDB" id="4MB0"/>
    </source>
</evidence>
<evidence type="ECO:0007744" key="7">
    <source>
        <dbReference type="PDB" id="4MB2"/>
    </source>
</evidence>
<evidence type="ECO:0007829" key="8">
    <source>
        <dbReference type="PDB" id="4MB0"/>
    </source>
</evidence>
<feature type="chain" id="PRO_0000448252" description="4-phosphopantoate--beta-alanine ligase">
    <location>
        <begin position="1"/>
        <end position="261"/>
    </location>
</feature>
<feature type="binding site" evidence="1 2 7">
    <location>
        <position position="17"/>
    </location>
    <ligand>
        <name>ATP</name>
        <dbReference type="ChEBI" id="CHEBI:30616"/>
    </ligand>
</feature>
<feature type="binding site" evidence="1 2 7">
    <location>
        <position position="39"/>
    </location>
    <ligand>
        <name>ATP</name>
        <dbReference type="ChEBI" id="CHEBI:30616"/>
    </ligand>
</feature>
<feature type="binding site" evidence="2 7">
    <location>
        <begin position="181"/>
        <end position="182"/>
    </location>
    <ligand>
        <name>ATP</name>
        <dbReference type="ChEBI" id="CHEBI:30616"/>
    </ligand>
</feature>
<feature type="binding site" evidence="1">
    <location>
        <begin position="187"/>
        <end position="188"/>
    </location>
    <ligand>
        <name>ATP</name>
        <dbReference type="ChEBI" id="CHEBI:30616"/>
    </ligand>
</feature>
<feature type="binding site" evidence="1 2 7">
    <location>
        <begin position="199"/>
        <end position="200"/>
    </location>
    <ligand>
        <name>ATP</name>
        <dbReference type="ChEBI" id="CHEBI:30616"/>
    </ligand>
</feature>
<feature type="helix" evidence="8">
    <location>
        <begin position="11"/>
        <end position="25"/>
    </location>
</feature>
<feature type="helix" evidence="8">
    <location>
        <begin position="31"/>
        <end position="47"/>
    </location>
</feature>
<feature type="helix" evidence="8">
    <location>
        <begin position="53"/>
        <end position="68"/>
    </location>
</feature>
<feature type="strand" evidence="8">
    <location>
        <begin position="73"/>
        <end position="76"/>
    </location>
</feature>
<feature type="helix" evidence="8">
    <location>
        <begin position="78"/>
        <end position="83"/>
    </location>
</feature>
<feature type="helix" evidence="8">
    <location>
        <begin position="85"/>
        <end position="95"/>
    </location>
</feature>
<feature type="strand" evidence="8">
    <location>
        <begin position="98"/>
        <end position="101"/>
    </location>
</feature>
<feature type="helix" evidence="8">
    <location>
        <begin position="108"/>
        <end position="119"/>
    </location>
</feature>
<feature type="turn" evidence="8">
    <location>
        <begin position="142"/>
        <end position="144"/>
    </location>
</feature>
<feature type="turn" evidence="8">
    <location>
        <begin position="148"/>
        <end position="153"/>
    </location>
</feature>
<feature type="strand" evidence="8">
    <location>
        <begin position="155"/>
        <end position="158"/>
    </location>
</feature>
<feature type="helix" evidence="8">
    <location>
        <begin position="164"/>
        <end position="172"/>
    </location>
</feature>
<feature type="strand" evidence="8">
    <location>
        <begin position="176"/>
        <end position="180"/>
    </location>
</feature>
<feature type="helix" evidence="8">
    <location>
        <begin position="187"/>
        <end position="191"/>
    </location>
</feature>
<feature type="strand" evidence="8">
    <location>
        <begin position="193"/>
        <end position="196"/>
    </location>
</feature>
<feature type="helix" evidence="8">
    <location>
        <begin position="200"/>
        <end position="214"/>
    </location>
</feature>
<feature type="helix" evidence="8">
    <location>
        <begin position="219"/>
        <end position="228"/>
    </location>
</feature>
<feature type="helix" evidence="8">
    <location>
        <begin position="231"/>
        <end position="252"/>
    </location>
</feature>
<proteinExistence type="evidence at protein level"/>